<keyword id="KW-0030">Aminoacyl-tRNA synthetase</keyword>
<keyword id="KW-0067">ATP-binding</keyword>
<keyword id="KW-0175">Coiled coil</keyword>
<keyword id="KW-0963">Cytoplasm</keyword>
<keyword id="KW-0217">Developmental protein</keyword>
<keyword id="KW-0436">Ligase</keyword>
<keyword id="KW-0496">Mitochondrion</keyword>
<keyword id="KW-0547">Nucleotide-binding</keyword>
<keyword id="KW-0648">Protein biosynthesis</keyword>
<keyword id="KW-1185">Reference proteome</keyword>
<keyword id="KW-0809">Transit peptide</keyword>
<gene>
    <name evidence="8" type="primary">TWN2</name>
    <name type="ordered locus">At1g14610</name>
    <name type="ORF">T5E21.11</name>
</gene>
<accession>P93736</accession>
<accession>Q6NPT2</accession>
<accession>Q8W4A8</accession>
<accession>Q9MA22</accession>
<dbReference type="EC" id="6.1.1.9" evidence="9"/>
<dbReference type="EMBL" id="U89986">
    <property type="protein sequence ID" value="AAB49704.1"/>
    <property type="status" value="ALT_FRAME"/>
    <property type="molecule type" value="mRNA"/>
</dbReference>
<dbReference type="EMBL" id="BT010735">
    <property type="protein sequence ID" value="AAR23705.1"/>
    <property type="molecule type" value="mRNA"/>
</dbReference>
<dbReference type="EMBL" id="AC010657">
    <property type="protein sequence ID" value="AAF63175.1"/>
    <property type="status" value="ALT_SEQ"/>
    <property type="molecule type" value="Genomic_DNA"/>
</dbReference>
<dbReference type="EMBL" id="CP002684">
    <property type="protein sequence ID" value="AEE29190.1"/>
    <property type="molecule type" value="Genomic_DNA"/>
</dbReference>
<dbReference type="EMBL" id="AY062693">
    <property type="protein sequence ID" value="AAL32771.1"/>
    <property type="molecule type" value="mRNA"/>
</dbReference>
<dbReference type="EMBL" id="U93308">
    <property type="protein sequence ID" value="AAB51589.1"/>
    <property type="molecule type" value="Genomic_DNA"/>
</dbReference>
<dbReference type="PIR" id="F86280">
    <property type="entry name" value="F86280"/>
</dbReference>
<dbReference type="RefSeq" id="NP_172913.1">
    <property type="nucleotide sequence ID" value="NM_101328.4"/>
</dbReference>
<dbReference type="SMR" id="P93736"/>
<dbReference type="BioGRID" id="23263">
    <property type="interactions" value="2"/>
</dbReference>
<dbReference type="FunCoup" id="P93736">
    <property type="interactions" value="4470"/>
</dbReference>
<dbReference type="STRING" id="3702.P93736"/>
<dbReference type="GlyGen" id="P93736">
    <property type="glycosylation" value="1 site"/>
</dbReference>
<dbReference type="iPTMnet" id="P93736"/>
<dbReference type="MetOSite" id="P93736"/>
<dbReference type="PaxDb" id="3702-AT1G14610.1"/>
<dbReference type="ProteomicsDB" id="246389"/>
<dbReference type="EnsemblPlants" id="AT1G14610.1">
    <property type="protein sequence ID" value="AT1G14610.1"/>
    <property type="gene ID" value="AT1G14610"/>
</dbReference>
<dbReference type="GeneID" id="838023"/>
<dbReference type="Gramene" id="AT1G14610.1">
    <property type="protein sequence ID" value="AT1G14610.1"/>
    <property type="gene ID" value="AT1G14610"/>
</dbReference>
<dbReference type="KEGG" id="ath:AT1G14610"/>
<dbReference type="Araport" id="AT1G14610"/>
<dbReference type="TAIR" id="AT1G14610">
    <property type="gene designation" value="TWN2"/>
</dbReference>
<dbReference type="eggNOG" id="KOG0432">
    <property type="taxonomic scope" value="Eukaryota"/>
</dbReference>
<dbReference type="HOGENOM" id="CLU_001493_0_1_1"/>
<dbReference type="InParanoid" id="P93736"/>
<dbReference type="OMA" id="LDTWMDS"/>
<dbReference type="PhylomeDB" id="P93736"/>
<dbReference type="BRENDA" id="6.1.1.9">
    <property type="organism ID" value="399"/>
</dbReference>
<dbReference type="PRO" id="PR:P93736"/>
<dbReference type="Proteomes" id="UP000006548">
    <property type="component" value="Chromosome 1"/>
</dbReference>
<dbReference type="ExpressionAtlas" id="P93736">
    <property type="expression patterns" value="baseline and differential"/>
</dbReference>
<dbReference type="GO" id="GO:0009507">
    <property type="term" value="C:chloroplast"/>
    <property type="evidence" value="ECO:0000314"/>
    <property type="project" value="TAIR"/>
</dbReference>
<dbReference type="GO" id="GO:0005829">
    <property type="term" value="C:cytosol"/>
    <property type="evidence" value="ECO:0007669"/>
    <property type="project" value="UniProtKB-SubCell"/>
</dbReference>
<dbReference type="GO" id="GO:0005576">
    <property type="term" value="C:extracellular region"/>
    <property type="evidence" value="ECO:0007005"/>
    <property type="project" value="TAIR"/>
</dbReference>
<dbReference type="GO" id="GO:0005739">
    <property type="term" value="C:mitochondrion"/>
    <property type="evidence" value="ECO:0000314"/>
    <property type="project" value="TAIR"/>
</dbReference>
<dbReference type="GO" id="GO:0002161">
    <property type="term" value="F:aminoacyl-tRNA deacylase activity"/>
    <property type="evidence" value="ECO:0007669"/>
    <property type="project" value="InterPro"/>
</dbReference>
<dbReference type="GO" id="GO:0005524">
    <property type="term" value="F:ATP binding"/>
    <property type="evidence" value="ECO:0007669"/>
    <property type="project" value="UniProtKB-KW"/>
</dbReference>
<dbReference type="GO" id="GO:0004832">
    <property type="term" value="F:valine-tRNA ligase activity"/>
    <property type="evidence" value="ECO:0007669"/>
    <property type="project" value="UniProtKB-EC"/>
</dbReference>
<dbReference type="GO" id="GO:0009793">
    <property type="term" value="P:embryo development ending in seed dormancy"/>
    <property type="evidence" value="ECO:0000315"/>
    <property type="project" value="TAIR"/>
</dbReference>
<dbReference type="GO" id="GO:0006438">
    <property type="term" value="P:valyl-tRNA aminoacylation"/>
    <property type="evidence" value="ECO:0007669"/>
    <property type="project" value="InterPro"/>
</dbReference>
<dbReference type="CDD" id="cd07962">
    <property type="entry name" value="Anticodon_Ia_Val"/>
    <property type="match status" value="1"/>
</dbReference>
<dbReference type="CDD" id="cd00817">
    <property type="entry name" value="ValRS_core"/>
    <property type="match status" value="1"/>
</dbReference>
<dbReference type="FunFam" id="1.10.730.10:FF:000009">
    <property type="entry name" value="Valine--tRNA ligase, mitochondrial"/>
    <property type="match status" value="1"/>
</dbReference>
<dbReference type="FunFam" id="3.40.50.620:FF:000020">
    <property type="entry name" value="Valine--tRNA ligase, mitochondrial"/>
    <property type="match status" value="1"/>
</dbReference>
<dbReference type="FunFam" id="3.90.740.10:FF:000005">
    <property type="entry name" value="Valine--tRNA ligase, mitochondrial"/>
    <property type="match status" value="1"/>
</dbReference>
<dbReference type="FunFam" id="3.40.50.620:FF:000197">
    <property type="entry name" value="Valyl tRNA synthetase"/>
    <property type="match status" value="1"/>
</dbReference>
<dbReference type="Gene3D" id="3.40.50.620">
    <property type="entry name" value="HUPs"/>
    <property type="match status" value="2"/>
</dbReference>
<dbReference type="Gene3D" id="1.10.730.10">
    <property type="entry name" value="Isoleucyl-tRNA Synthetase, Domain 1"/>
    <property type="match status" value="1"/>
</dbReference>
<dbReference type="Gene3D" id="1.10.287.380">
    <property type="entry name" value="Valyl-tRNA synthetase, C-terminal domain"/>
    <property type="match status" value="1"/>
</dbReference>
<dbReference type="Gene3D" id="3.90.740.10">
    <property type="entry name" value="Valyl/Leucyl/Isoleucyl-tRNA synthetase, editing domain"/>
    <property type="match status" value="1"/>
</dbReference>
<dbReference type="HAMAP" id="MF_02004">
    <property type="entry name" value="Val_tRNA_synth_type1"/>
    <property type="match status" value="1"/>
</dbReference>
<dbReference type="InterPro" id="IPR001412">
    <property type="entry name" value="aa-tRNA-synth_I_CS"/>
</dbReference>
<dbReference type="InterPro" id="IPR002300">
    <property type="entry name" value="aa-tRNA-synth_Ia"/>
</dbReference>
<dbReference type="InterPro" id="IPR033705">
    <property type="entry name" value="Anticodon_Ia_Val"/>
</dbReference>
<dbReference type="InterPro" id="IPR013155">
    <property type="entry name" value="M/V/L/I-tRNA-synth_anticd-bd"/>
</dbReference>
<dbReference type="InterPro" id="IPR014729">
    <property type="entry name" value="Rossmann-like_a/b/a_fold"/>
</dbReference>
<dbReference type="InterPro" id="IPR009080">
    <property type="entry name" value="tRNAsynth_Ia_anticodon-bd"/>
</dbReference>
<dbReference type="InterPro" id="IPR037118">
    <property type="entry name" value="Val-tRNA_synth_C_sf"/>
</dbReference>
<dbReference type="InterPro" id="IPR009008">
    <property type="entry name" value="Val/Leu/Ile-tRNA-synth_edit"/>
</dbReference>
<dbReference type="InterPro" id="IPR002303">
    <property type="entry name" value="Valyl-tRNA_ligase"/>
</dbReference>
<dbReference type="NCBIfam" id="NF004349">
    <property type="entry name" value="PRK05729.1"/>
    <property type="match status" value="1"/>
</dbReference>
<dbReference type="NCBIfam" id="TIGR00422">
    <property type="entry name" value="valS"/>
    <property type="match status" value="1"/>
</dbReference>
<dbReference type="PANTHER" id="PTHR11946:SF109">
    <property type="entry name" value="VALINE--TRNA LIGASE"/>
    <property type="match status" value="1"/>
</dbReference>
<dbReference type="PANTHER" id="PTHR11946">
    <property type="entry name" value="VALYL-TRNA SYNTHETASES"/>
    <property type="match status" value="1"/>
</dbReference>
<dbReference type="Pfam" id="PF08264">
    <property type="entry name" value="Anticodon_1"/>
    <property type="match status" value="1"/>
</dbReference>
<dbReference type="Pfam" id="PF00133">
    <property type="entry name" value="tRNA-synt_1"/>
    <property type="match status" value="1"/>
</dbReference>
<dbReference type="PRINTS" id="PR00986">
    <property type="entry name" value="TRNASYNTHVAL"/>
</dbReference>
<dbReference type="SUPFAM" id="SSF47323">
    <property type="entry name" value="Anticodon-binding domain of a subclass of class I aminoacyl-tRNA synthetases"/>
    <property type="match status" value="1"/>
</dbReference>
<dbReference type="SUPFAM" id="SSF52374">
    <property type="entry name" value="Nucleotidylyl transferase"/>
    <property type="match status" value="1"/>
</dbReference>
<dbReference type="SUPFAM" id="SSF50677">
    <property type="entry name" value="ValRS/IleRS/LeuRS editing domain"/>
    <property type="match status" value="1"/>
</dbReference>
<dbReference type="PROSITE" id="PS00178">
    <property type="entry name" value="AA_TRNA_LIGASE_I"/>
    <property type="match status" value="1"/>
</dbReference>
<name>SYVM1_ARATH</name>
<proteinExistence type="evidence at protein level"/>
<evidence type="ECO:0000250" key="1"/>
<evidence type="ECO:0000255" key="2"/>
<evidence type="ECO:0000256" key="3">
    <source>
        <dbReference type="SAM" id="MobiDB-lite"/>
    </source>
</evidence>
<evidence type="ECO:0000269" key="4">
    <source>
    </source>
</evidence>
<evidence type="ECO:0000269" key="5">
    <source>
    </source>
</evidence>
<evidence type="ECO:0000269" key="6">
    <source>
    </source>
</evidence>
<evidence type="ECO:0000303" key="7">
    <source>
    </source>
</evidence>
<evidence type="ECO:0000303" key="8">
    <source>
    </source>
</evidence>
<evidence type="ECO:0000305" key="9"/>
<evidence type="ECO:0000305" key="10">
    <source>
    </source>
</evidence>
<comment type="function">
    <text evidence="6">Required for embryo development and seed viability.</text>
</comment>
<comment type="catalytic activity">
    <reaction evidence="9">
        <text>tRNA(Val) + L-valine + ATP = L-valyl-tRNA(Val) + AMP + diphosphate</text>
        <dbReference type="Rhea" id="RHEA:10704"/>
        <dbReference type="Rhea" id="RHEA-COMP:9672"/>
        <dbReference type="Rhea" id="RHEA-COMP:9708"/>
        <dbReference type="ChEBI" id="CHEBI:30616"/>
        <dbReference type="ChEBI" id="CHEBI:33019"/>
        <dbReference type="ChEBI" id="CHEBI:57762"/>
        <dbReference type="ChEBI" id="CHEBI:78442"/>
        <dbReference type="ChEBI" id="CHEBI:78537"/>
        <dbReference type="ChEBI" id="CHEBI:456215"/>
        <dbReference type="EC" id="6.1.1.9"/>
    </reaction>
</comment>
<comment type="subcellular location">
    <subcellularLocation>
        <location evidence="4 10">Mitochondrion</location>
    </subcellularLocation>
    <subcellularLocation>
        <location evidence="4">Cytoplasm</location>
        <location evidence="4">Cytosol</location>
    </subcellularLocation>
</comment>
<comment type="similarity">
    <text evidence="9">Belongs to the class-I aminoacyl-tRNA synthetase family.</text>
</comment>
<comment type="sequence caution" evidence="9">
    <conflict type="frameshift">
        <sequence resource="EMBL-CDS" id="AAB49704"/>
    </conflict>
</comment>
<comment type="sequence caution" evidence="9">
    <conflict type="erroneous gene model prediction">
        <sequence resource="EMBL-CDS" id="AAF63175"/>
    </conflict>
</comment>
<organism>
    <name type="scientific">Arabidopsis thaliana</name>
    <name type="common">Mouse-ear cress</name>
    <dbReference type="NCBI Taxonomy" id="3702"/>
    <lineage>
        <taxon>Eukaryota</taxon>
        <taxon>Viridiplantae</taxon>
        <taxon>Streptophyta</taxon>
        <taxon>Embryophyta</taxon>
        <taxon>Tracheophyta</taxon>
        <taxon>Spermatophyta</taxon>
        <taxon>Magnoliopsida</taxon>
        <taxon>eudicotyledons</taxon>
        <taxon>Gunneridae</taxon>
        <taxon>Pentapetalae</taxon>
        <taxon>rosids</taxon>
        <taxon>malvids</taxon>
        <taxon>Brassicales</taxon>
        <taxon>Brassicaceae</taxon>
        <taxon>Camelineae</taxon>
        <taxon>Arabidopsis</taxon>
    </lineage>
</organism>
<reference key="1">
    <citation type="journal article" date="1997" name="Proc. Natl. Acad. Sci. U.S.A.">
        <title>Suspensor-derived polyembryony caused by altered expression of valyl-tRNA synthetase in the twn2 mutant of Arabidopsis.</title>
        <authorList>
            <person name="Zhang J.Z."/>
            <person name="Somerville C.R."/>
        </authorList>
    </citation>
    <scope>NUCLEOTIDE SEQUENCE [GENOMIC DNA / MRNA]</scope>
    <scope>FUNCTION</scope>
    <source>
        <strain>cv. Columbia</strain>
    </source>
</reference>
<reference key="2">
    <citation type="journal article" date="2000" name="Nature">
        <title>Sequence and analysis of chromosome 1 of the plant Arabidopsis thaliana.</title>
        <authorList>
            <person name="Theologis A."/>
            <person name="Ecker J.R."/>
            <person name="Palm C.J."/>
            <person name="Federspiel N.A."/>
            <person name="Kaul S."/>
            <person name="White O."/>
            <person name="Alonso J."/>
            <person name="Altafi H."/>
            <person name="Araujo R."/>
            <person name="Bowman C.L."/>
            <person name="Brooks S.Y."/>
            <person name="Buehler E."/>
            <person name="Chan A."/>
            <person name="Chao Q."/>
            <person name="Chen H."/>
            <person name="Cheuk R.F."/>
            <person name="Chin C.W."/>
            <person name="Chung M.K."/>
            <person name="Conn L."/>
            <person name="Conway A.B."/>
            <person name="Conway A.R."/>
            <person name="Creasy T.H."/>
            <person name="Dewar K."/>
            <person name="Dunn P."/>
            <person name="Etgu P."/>
            <person name="Feldblyum T.V."/>
            <person name="Feng J.-D."/>
            <person name="Fong B."/>
            <person name="Fujii C.Y."/>
            <person name="Gill J.E."/>
            <person name="Goldsmith A.D."/>
            <person name="Haas B."/>
            <person name="Hansen N.F."/>
            <person name="Hughes B."/>
            <person name="Huizar L."/>
            <person name="Hunter J.L."/>
            <person name="Jenkins J."/>
            <person name="Johnson-Hopson C."/>
            <person name="Khan S."/>
            <person name="Khaykin E."/>
            <person name="Kim C.J."/>
            <person name="Koo H.L."/>
            <person name="Kremenetskaia I."/>
            <person name="Kurtz D.B."/>
            <person name="Kwan A."/>
            <person name="Lam B."/>
            <person name="Langin-Hooper S."/>
            <person name="Lee A."/>
            <person name="Lee J.M."/>
            <person name="Lenz C.A."/>
            <person name="Li J.H."/>
            <person name="Li Y.-P."/>
            <person name="Lin X."/>
            <person name="Liu S.X."/>
            <person name="Liu Z.A."/>
            <person name="Luros J.S."/>
            <person name="Maiti R."/>
            <person name="Marziali A."/>
            <person name="Militscher J."/>
            <person name="Miranda M."/>
            <person name="Nguyen M."/>
            <person name="Nierman W.C."/>
            <person name="Osborne B.I."/>
            <person name="Pai G."/>
            <person name="Peterson J."/>
            <person name="Pham P.K."/>
            <person name="Rizzo M."/>
            <person name="Rooney T."/>
            <person name="Rowley D."/>
            <person name="Sakano H."/>
            <person name="Salzberg S.L."/>
            <person name="Schwartz J.R."/>
            <person name="Shinn P."/>
            <person name="Southwick A.M."/>
            <person name="Sun H."/>
            <person name="Tallon L.J."/>
            <person name="Tambunga G."/>
            <person name="Toriumi M.J."/>
            <person name="Town C.D."/>
            <person name="Utterback T."/>
            <person name="Van Aken S."/>
            <person name="Vaysberg M."/>
            <person name="Vysotskaia V.S."/>
            <person name="Walker M."/>
            <person name="Wu D."/>
            <person name="Yu G."/>
            <person name="Fraser C.M."/>
            <person name="Venter J.C."/>
            <person name="Davis R.W."/>
        </authorList>
    </citation>
    <scope>NUCLEOTIDE SEQUENCE [LARGE SCALE GENOMIC DNA]</scope>
    <source>
        <strain>cv. Columbia</strain>
    </source>
</reference>
<reference key="3">
    <citation type="journal article" date="2017" name="Plant J.">
        <title>Araport11: a complete reannotation of the Arabidopsis thaliana reference genome.</title>
        <authorList>
            <person name="Cheng C.Y."/>
            <person name="Krishnakumar V."/>
            <person name="Chan A.P."/>
            <person name="Thibaud-Nissen F."/>
            <person name="Schobel S."/>
            <person name="Town C.D."/>
        </authorList>
    </citation>
    <scope>GENOME REANNOTATION</scope>
    <source>
        <strain>cv. Columbia</strain>
    </source>
</reference>
<reference key="4">
    <citation type="journal article" date="2003" name="Science">
        <title>Empirical analysis of transcriptional activity in the Arabidopsis genome.</title>
        <authorList>
            <person name="Yamada K."/>
            <person name="Lim J."/>
            <person name="Dale J.M."/>
            <person name="Chen H."/>
            <person name="Shinn P."/>
            <person name="Palm C.J."/>
            <person name="Southwick A.M."/>
            <person name="Wu H.C."/>
            <person name="Kim C.J."/>
            <person name="Nguyen M."/>
            <person name="Pham P.K."/>
            <person name="Cheuk R.F."/>
            <person name="Karlin-Newmann G."/>
            <person name="Liu S.X."/>
            <person name="Lam B."/>
            <person name="Sakano H."/>
            <person name="Wu T."/>
            <person name="Yu G."/>
            <person name="Miranda M."/>
            <person name="Quach H.L."/>
            <person name="Tripp M."/>
            <person name="Chang C.H."/>
            <person name="Lee J.M."/>
            <person name="Toriumi M.J."/>
            <person name="Chan M.M."/>
            <person name="Tang C.C."/>
            <person name="Onodera C.S."/>
            <person name="Deng J.M."/>
            <person name="Akiyama K."/>
            <person name="Ansari Y."/>
            <person name="Arakawa T."/>
            <person name="Banh J."/>
            <person name="Banno F."/>
            <person name="Bowser L."/>
            <person name="Brooks S.Y."/>
            <person name="Carninci P."/>
            <person name="Chao Q."/>
            <person name="Choy N."/>
            <person name="Enju A."/>
            <person name="Goldsmith A.D."/>
            <person name="Gurjal M."/>
            <person name="Hansen N.F."/>
            <person name="Hayashizaki Y."/>
            <person name="Johnson-Hopson C."/>
            <person name="Hsuan V.W."/>
            <person name="Iida K."/>
            <person name="Karnes M."/>
            <person name="Khan S."/>
            <person name="Koesema E."/>
            <person name="Ishida J."/>
            <person name="Jiang P.X."/>
            <person name="Jones T."/>
            <person name="Kawai J."/>
            <person name="Kamiya A."/>
            <person name="Meyers C."/>
            <person name="Nakajima M."/>
            <person name="Narusaka M."/>
            <person name="Seki M."/>
            <person name="Sakurai T."/>
            <person name="Satou M."/>
            <person name="Tamse R."/>
            <person name="Vaysberg M."/>
            <person name="Wallender E.K."/>
            <person name="Wong C."/>
            <person name="Yamamura Y."/>
            <person name="Yuan S."/>
            <person name="Shinozaki K."/>
            <person name="Davis R.W."/>
            <person name="Theologis A."/>
            <person name="Ecker J.R."/>
        </authorList>
    </citation>
    <scope>NUCLEOTIDE SEQUENCE [LARGE SCALE MRNA] OF 3-1108</scope>
    <source>
        <strain>cv. Columbia</strain>
    </source>
</reference>
<reference key="5">
    <citation type="submission" date="2003-11" db="EMBL/GenBank/DDBJ databases">
        <title>Arabidopsis cDNA clones.</title>
        <authorList>
            <person name="Cheuk R.F."/>
            <person name="Chen H."/>
            <person name="Kim C.J."/>
            <person name="Shinn P."/>
            <person name="Carninci P."/>
            <person name="Hayashizaki Y."/>
            <person name="Ishida J."/>
            <person name="Kamiya A."/>
            <person name="Kawai J."/>
            <person name="Narusaka M."/>
            <person name="Sakurai T."/>
            <person name="Satou M."/>
            <person name="Seki M."/>
            <person name="Shinozaki K."/>
            <person name="Ecker J.R."/>
        </authorList>
    </citation>
    <scope>NUCLEOTIDE SEQUENCE [MRNA] OF 45-1108</scope>
    <source>
        <strain>cv. Columbia</strain>
    </source>
</reference>
<reference key="6">
    <citation type="journal article" date="1999" name="Eur. J. Biochem.">
        <title>Characterization of two bifunctional Arabdopsis thaliana genes coding for mitochondrial and cytosolic forms of valyl-tRNA synthetase and threonyl-tRNA synthetase by alternative use of two in-frame AUGs.</title>
        <authorList>
            <person name="Souciet G."/>
            <person name="Menand B."/>
            <person name="Ovesna J."/>
            <person name="Cosset A."/>
            <person name="Dietrich A."/>
            <person name="Wintz H."/>
        </authorList>
    </citation>
    <scope>SUBCELLULAR LOCATION</scope>
</reference>
<reference key="7">
    <citation type="journal article" date="2015" name="J. Exp. Bot.">
        <title>Identification of cleavage sites and substrate proteins for two mitochondrial intermediate peptidases in Arabidopsis thaliana.</title>
        <authorList>
            <person name="Carrie C."/>
            <person name="Venne A.S."/>
            <person name="Zahedi R.P."/>
            <person name="Soll J."/>
        </authorList>
    </citation>
    <scope>IDENTIFICATION BY MASS SPECTROMETRY</scope>
    <scope>CLEAVAGE OF TRANSIT PEPTIDE AFTER SER-46</scope>
</reference>
<sequence length="1108" mass="125926">MSLLFLRRAKPLFVSCCSATHSRSSFLSPTLTNQLVRSFHGSRTMSESEKKILTEEELERKKKKEEKAKEKELKKQKALEKERLAELKAKQAKDGTNVPKKSAKKSSKRDASEENPEDFVDPETPLGERKRLSSQMAKQYSPATVEKSWYAWWEKSDLFKADAKSSKPPFVIVLPPPNVTGALHIGHALTSAIEDTIIRWKRMSGYNALWVPGVDHAGIATQVVVEKKIMRDRGMTRHDVGREEFVKEVWKWKNQYGGTILTQLRRLGASLDWSRECFTMDEQRSKAVTEAFVRLYKEGLIYRDIRLVNWDCILRTAISDVEVEYIDIKEKTLLKVPGYEKPVEFGLLTSFAYPLEGGLGEVIVATTRVETMLGDTAIAIHPDDARYKHLHGKFAVHPFNGRKLPIICDGILVDPNFGTGCVKITPAHDPNDCEVGKRHKLEFINIFTDDGKINTNGGSDFAGMPRFAAREAVVEALQKQGLYRGAKNNEMRLGLCSRTNDVIEPMIKPQWYVNCSMIGKEALDVAITDENKKLEFVPKQYTAEWRRWLENIRDWCISRQLWWGHRIPAWYATLEEDQLKEVGAYSDHWVVARTEDDAREEAAQKFLGKKFELTRDPDVLDTWFSSGLFPLSVLGWPDVTDDFKAFYPTSVLETGHDILFFWVARMVMMGMKLGGEVPFSKVYFHPMIRDAHGRKMSKSLGNVIDPLEVINGVTLEGLHKRLEEGNLDPKEVIVAKEGQVKDFPNGIPECGTDALRFALVSYTAQSDKINLDILRVVGYRQWCNKLWNAVRFAMMKLGDGYTPPQTLSPETMPFSCQWILSVLNKAISKTVVSLDAFEFSDAANTIYAWWQYQFCDVYIEAIKPYFAGDNPTFASERAHAQHALWISLETGLRLLHPFMPFVTEELWQRLPAPKDTERKASIMICDYPSAIENWSNEKVESEMDTVLATVKCMRALRAGLLEKQKNERLPAFALCENNVTSEIVKSHELEIRTLANLSSLEVVSKGQHAAPPGSSVETVNENLKVYLEVDGAINTEAEQEKIRNKIGELQKQKEKLQKMMSVSTYEEKVPANIKEDNANKLAKILQEFDFFEKESARLAAETSNSGNQ</sequence>
<feature type="transit peptide" description="Mitochondrion" evidence="5">
    <location>
        <begin position="1"/>
        <end position="46"/>
    </location>
</feature>
<feature type="chain" id="PRO_0000106258" description="Valine--tRNA ligase, mitochondrial 1" evidence="2">
    <location>
        <begin position="47"/>
        <end position="1108"/>
    </location>
</feature>
<feature type="region of interest" description="Disordered" evidence="3">
    <location>
        <begin position="57"/>
        <end position="138"/>
    </location>
</feature>
<feature type="coiled-coil region" evidence="2">
    <location>
        <begin position="1032"/>
        <end position="1064"/>
    </location>
</feature>
<feature type="short sequence motif" description="'HIGH' region" evidence="9">
    <location>
        <begin position="177"/>
        <end position="187"/>
    </location>
</feature>
<feature type="short sequence motif" description="'KMSKS' region" evidence="9">
    <location>
        <begin position="695"/>
        <end position="699"/>
    </location>
</feature>
<feature type="compositionally biased region" description="Basic and acidic residues" evidence="3">
    <location>
        <begin position="57"/>
        <end position="93"/>
    </location>
</feature>
<feature type="binding site" evidence="1">
    <location>
        <position position="698"/>
    </location>
    <ligand>
        <name>ATP</name>
        <dbReference type="ChEBI" id="CHEBI:30616"/>
    </ligand>
</feature>
<feature type="sequence conflict" description="In Ref. 1." evidence="9" ref="1">
    <original>GGLGE</original>
    <variation>ELGR</variation>
    <location>
        <begin position="357"/>
        <end position="361"/>
    </location>
</feature>
<feature type="sequence conflict" description="In Ref. 1; AAB49704." evidence="9" ref="1">
    <original>E</original>
    <variation>G</variation>
    <location>
        <position position="716"/>
    </location>
</feature>
<feature type="sequence conflict" description="In Ref. 1; AAB49704." evidence="9" ref="1">
    <original>D</original>
    <variation>S</variation>
    <location>
        <position position="799"/>
    </location>
</feature>
<feature type="sequence conflict" description="In Ref. 1; AAB49704." evidence="9" ref="1">
    <original>T</original>
    <variation>A</variation>
    <location>
        <position position="830"/>
    </location>
</feature>
<feature type="sequence conflict" description="In Ref. 1; AAB49704." evidence="9" ref="1">
    <original>E</original>
    <variation>K</variation>
    <location>
        <position position="1028"/>
    </location>
</feature>
<feature type="sequence conflict" description="In Ref. 1; AAB49704." evidence="9" ref="1">
    <original>S</original>
    <variation>F</variation>
    <location>
        <position position="1063"/>
    </location>
</feature>
<protein>
    <recommendedName>
        <fullName evidence="9">Valine--tRNA ligase, mitochondrial 1</fullName>
        <ecNumber evidence="9">6.1.1.9</ecNumber>
    </recommendedName>
    <alternativeName>
        <fullName evidence="7">AtSYV1</fullName>
    </alternativeName>
    <alternativeName>
        <fullName evidence="9">Protein TWIN 2</fullName>
    </alternativeName>
    <alternativeName>
        <fullName evidence="9">Valyl-tRNA synthetase</fullName>
        <shortName evidence="9">ValRS</shortName>
    </alternativeName>
</protein>